<accession>Q7A7E3</accession>
<sequence length="341" mass="38521">MIEFRQVSKSFHKKKQTIDALKDVSFTVNRNDIFGVIGYSGAGKSTLVRLVNHLEAASNGQVIVDGHDITNYSEKGMREIKKDIGMIFQHFNLLNSATVFKNVAMPLILSKKSKTEIKQRVTEMLEFVGLSDKKDQFPDELSGGQKQRVAIARALVTNPKILLCDEATSALDPATTASILTLLKNVNQTFGITIMMITHEMRVIKDICNRVAVMEKGQVVETGTVKEVFSHPKTTIAQNFVSTVIQTEPSTSLIRRLNDEQVGGFKDYKIFVEETQVTQPIINDLIQICGREVKILFSSMSEIQGNTVCYMWLRFNIDQQFDDTAINQYFKEKNIQFEEVH</sequence>
<gene>
    <name evidence="1" type="primary">metN1</name>
    <name type="ordered locus">SA0420</name>
</gene>
<dbReference type="EC" id="7.4.2.11" evidence="1"/>
<dbReference type="EMBL" id="BA000018">
    <property type="protein sequence ID" value="BAB41650.1"/>
    <property type="molecule type" value="Genomic_DNA"/>
</dbReference>
<dbReference type="PIR" id="G89811">
    <property type="entry name" value="G89811"/>
</dbReference>
<dbReference type="RefSeq" id="WP_000569281.1">
    <property type="nucleotide sequence ID" value="NC_002745.2"/>
</dbReference>
<dbReference type="SMR" id="Q7A7E3"/>
<dbReference type="EnsemblBacteria" id="BAB41650">
    <property type="protein sequence ID" value="BAB41650"/>
    <property type="gene ID" value="BAB41650"/>
</dbReference>
<dbReference type="KEGG" id="sau:SA0420"/>
<dbReference type="HOGENOM" id="CLU_000604_1_3_9"/>
<dbReference type="GO" id="GO:0005886">
    <property type="term" value="C:plasma membrane"/>
    <property type="evidence" value="ECO:0007669"/>
    <property type="project" value="UniProtKB-SubCell"/>
</dbReference>
<dbReference type="GO" id="GO:0033232">
    <property type="term" value="F:ABC-type D-methionine transporter activity"/>
    <property type="evidence" value="ECO:0007669"/>
    <property type="project" value="UniProtKB-EC"/>
</dbReference>
<dbReference type="GO" id="GO:0005524">
    <property type="term" value="F:ATP binding"/>
    <property type="evidence" value="ECO:0007669"/>
    <property type="project" value="UniProtKB-KW"/>
</dbReference>
<dbReference type="GO" id="GO:0016887">
    <property type="term" value="F:ATP hydrolysis activity"/>
    <property type="evidence" value="ECO:0007669"/>
    <property type="project" value="InterPro"/>
</dbReference>
<dbReference type="CDD" id="cd03258">
    <property type="entry name" value="ABC_MetN_methionine_transporter"/>
    <property type="match status" value="1"/>
</dbReference>
<dbReference type="FunFam" id="3.40.50.300:FF:000056">
    <property type="entry name" value="Cell division ATP-binding protein FtsE"/>
    <property type="match status" value="1"/>
</dbReference>
<dbReference type="Gene3D" id="3.30.70.260">
    <property type="match status" value="1"/>
</dbReference>
<dbReference type="Gene3D" id="3.40.50.300">
    <property type="entry name" value="P-loop containing nucleotide triphosphate hydrolases"/>
    <property type="match status" value="1"/>
</dbReference>
<dbReference type="InterPro" id="IPR003593">
    <property type="entry name" value="AAA+_ATPase"/>
</dbReference>
<dbReference type="InterPro" id="IPR003439">
    <property type="entry name" value="ABC_transporter-like_ATP-bd"/>
</dbReference>
<dbReference type="InterPro" id="IPR017871">
    <property type="entry name" value="ABC_transporter-like_CS"/>
</dbReference>
<dbReference type="InterPro" id="IPR045865">
    <property type="entry name" value="ACT-like_dom_sf"/>
</dbReference>
<dbReference type="InterPro" id="IPR041701">
    <property type="entry name" value="MetN_ABC"/>
</dbReference>
<dbReference type="InterPro" id="IPR050086">
    <property type="entry name" value="MetN_ABC_transporter-like"/>
</dbReference>
<dbReference type="InterPro" id="IPR018449">
    <property type="entry name" value="NIL_domain"/>
</dbReference>
<dbReference type="InterPro" id="IPR027417">
    <property type="entry name" value="P-loop_NTPase"/>
</dbReference>
<dbReference type="PANTHER" id="PTHR43166">
    <property type="entry name" value="AMINO ACID IMPORT ATP-BINDING PROTEIN"/>
    <property type="match status" value="1"/>
</dbReference>
<dbReference type="PANTHER" id="PTHR43166:SF30">
    <property type="entry name" value="METHIONINE IMPORT ATP-BINDING PROTEIN METN"/>
    <property type="match status" value="1"/>
</dbReference>
<dbReference type="Pfam" id="PF00005">
    <property type="entry name" value="ABC_tran"/>
    <property type="match status" value="1"/>
</dbReference>
<dbReference type="Pfam" id="PF09383">
    <property type="entry name" value="NIL"/>
    <property type="match status" value="1"/>
</dbReference>
<dbReference type="SMART" id="SM00382">
    <property type="entry name" value="AAA"/>
    <property type="match status" value="1"/>
</dbReference>
<dbReference type="SMART" id="SM00930">
    <property type="entry name" value="NIL"/>
    <property type="match status" value="1"/>
</dbReference>
<dbReference type="SUPFAM" id="SSF55021">
    <property type="entry name" value="ACT-like"/>
    <property type="match status" value="1"/>
</dbReference>
<dbReference type="SUPFAM" id="SSF52540">
    <property type="entry name" value="P-loop containing nucleoside triphosphate hydrolases"/>
    <property type="match status" value="1"/>
</dbReference>
<dbReference type="PROSITE" id="PS00211">
    <property type="entry name" value="ABC_TRANSPORTER_1"/>
    <property type="match status" value="1"/>
</dbReference>
<dbReference type="PROSITE" id="PS50893">
    <property type="entry name" value="ABC_TRANSPORTER_2"/>
    <property type="match status" value="1"/>
</dbReference>
<dbReference type="PROSITE" id="PS51264">
    <property type="entry name" value="METN"/>
    <property type="match status" value="1"/>
</dbReference>
<proteinExistence type="inferred from homology"/>
<evidence type="ECO:0000255" key="1">
    <source>
        <dbReference type="HAMAP-Rule" id="MF_01719"/>
    </source>
</evidence>
<organism>
    <name type="scientific">Staphylococcus aureus (strain N315)</name>
    <dbReference type="NCBI Taxonomy" id="158879"/>
    <lineage>
        <taxon>Bacteria</taxon>
        <taxon>Bacillati</taxon>
        <taxon>Bacillota</taxon>
        <taxon>Bacilli</taxon>
        <taxon>Bacillales</taxon>
        <taxon>Staphylococcaceae</taxon>
        <taxon>Staphylococcus</taxon>
    </lineage>
</organism>
<name>METN1_STAAN</name>
<comment type="function">
    <text evidence="1">Part of the ABC transporter complex MetNIQ involved in methionine import. Responsible for energy coupling to the transport system.</text>
</comment>
<comment type="catalytic activity">
    <reaction evidence="1">
        <text>L-methionine(out) + ATP + H2O = L-methionine(in) + ADP + phosphate + H(+)</text>
        <dbReference type="Rhea" id="RHEA:29779"/>
        <dbReference type="ChEBI" id="CHEBI:15377"/>
        <dbReference type="ChEBI" id="CHEBI:15378"/>
        <dbReference type="ChEBI" id="CHEBI:30616"/>
        <dbReference type="ChEBI" id="CHEBI:43474"/>
        <dbReference type="ChEBI" id="CHEBI:57844"/>
        <dbReference type="ChEBI" id="CHEBI:456216"/>
        <dbReference type="EC" id="7.4.2.11"/>
    </reaction>
</comment>
<comment type="catalytic activity">
    <reaction evidence="1">
        <text>D-methionine(out) + ATP + H2O = D-methionine(in) + ADP + phosphate + H(+)</text>
        <dbReference type="Rhea" id="RHEA:29767"/>
        <dbReference type="ChEBI" id="CHEBI:15377"/>
        <dbReference type="ChEBI" id="CHEBI:15378"/>
        <dbReference type="ChEBI" id="CHEBI:30616"/>
        <dbReference type="ChEBI" id="CHEBI:43474"/>
        <dbReference type="ChEBI" id="CHEBI:57932"/>
        <dbReference type="ChEBI" id="CHEBI:456216"/>
        <dbReference type="EC" id="7.4.2.11"/>
    </reaction>
</comment>
<comment type="subunit">
    <text evidence="1">The complex is composed of two ATP-binding proteins (MetN), two transmembrane proteins (MetI) and a solute-binding protein (MetQ).</text>
</comment>
<comment type="subcellular location">
    <subcellularLocation>
        <location evidence="1">Cell membrane</location>
        <topology evidence="1">Peripheral membrane protein</topology>
    </subcellularLocation>
</comment>
<comment type="similarity">
    <text evidence="1">Belongs to the ABC transporter superfamily. Methionine importer (TC 3.A.1.24) family.</text>
</comment>
<reference key="1">
    <citation type="journal article" date="2001" name="Lancet">
        <title>Whole genome sequencing of meticillin-resistant Staphylococcus aureus.</title>
        <authorList>
            <person name="Kuroda M."/>
            <person name="Ohta T."/>
            <person name="Uchiyama I."/>
            <person name="Baba T."/>
            <person name="Yuzawa H."/>
            <person name="Kobayashi I."/>
            <person name="Cui L."/>
            <person name="Oguchi A."/>
            <person name="Aoki K."/>
            <person name="Nagai Y."/>
            <person name="Lian J.-Q."/>
            <person name="Ito T."/>
            <person name="Kanamori M."/>
            <person name="Matsumaru H."/>
            <person name="Maruyama A."/>
            <person name="Murakami H."/>
            <person name="Hosoyama A."/>
            <person name="Mizutani-Ui Y."/>
            <person name="Takahashi N.K."/>
            <person name="Sawano T."/>
            <person name="Inoue R."/>
            <person name="Kaito C."/>
            <person name="Sekimizu K."/>
            <person name="Hirakawa H."/>
            <person name="Kuhara S."/>
            <person name="Goto S."/>
            <person name="Yabuzaki J."/>
            <person name="Kanehisa M."/>
            <person name="Yamashita A."/>
            <person name="Oshima K."/>
            <person name="Furuya K."/>
            <person name="Yoshino C."/>
            <person name="Shiba T."/>
            <person name="Hattori M."/>
            <person name="Ogasawara N."/>
            <person name="Hayashi H."/>
            <person name="Hiramatsu K."/>
        </authorList>
    </citation>
    <scope>NUCLEOTIDE SEQUENCE [LARGE SCALE GENOMIC DNA]</scope>
    <source>
        <strain>N315</strain>
    </source>
</reference>
<keyword id="KW-0029">Amino-acid transport</keyword>
<keyword id="KW-0067">ATP-binding</keyword>
<keyword id="KW-1003">Cell membrane</keyword>
<keyword id="KW-0472">Membrane</keyword>
<keyword id="KW-0547">Nucleotide-binding</keyword>
<keyword id="KW-1278">Translocase</keyword>
<keyword id="KW-0813">Transport</keyword>
<feature type="chain" id="PRO_0000270399" description="Methionine import ATP-binding protein MetN 1">
    <location>
        <begin position="1"/>
        <end position="341"/>
    </location>
</feature>
<feature type="domain" description="ABC transporter" evidence="1">
    <location>
        <begin position="2"/>
        <end position="241"/>
    </location>
</feature>
<feature type="binding site" evidence="1">
    <location>
        <begin position="38"/>
        <end position="45"/>
    </location>
    <ligand>
        <name>ATP</name>
        <dbReference type="ChEBI" id="CHEBI:30616"/>
    </ligand>
</feature>
<protein>
    <recommendedName>
        <fullName evidence="1">Methionine import ATP-binding protein MetN 1</fullName>
        <ecNumber evidence="1">7.4.2.11</ecNumber>
    </recommendedName>
</protein>